<protein>
    <recommendedName>
        <fullName evidence="4">Protein METHYLENE BLUE SENSITIVITY 2</fullName>
    </recommendedName>
</protein>
<comment type="function">
    <text evidence="1 3">Required for acclimation to reactive oxygen species (ROS) responses downstream of beta-cyclocitral, including singlet oxygen 1O(2) detoxification reactions, especially upon light-mediated photooxidative stress, and leading to programmed cell death (By similarity). Prevents leaf senescence (PubMed:24151292).</text>
</comment>
<comment type="subcellular location">
    <subcellularLocation>
        <location evidence="3">Nucleus</location>
    </subcellularLocation>
    <subcellularLocation>
        <location evidence="3">Cytoplasm</location>
    </subcellularLocation>
    <subcellularLocation>
        <location evidence="1">Cytoplasm</location>
        <location evidence="1">Stress granule</location>
    </subcellularLocation>
    <text evidence="1">Moves from homogeneous distribution in the cytosol to discrete spots (e.g. stress granules (SGs) and processing bodies (PBs)) in response to singlet oxygen 1O(2) exposure.</text>
</comment>
<comment type="induction">
    <text evidence="3">Accumulates during senescence.</text>
</comment>
<comment type="disruption phenotype">
    <text evidence="3">Plants lacking both MBS1 and MBS2 exhibit premature leaf senescence.</text>
</comment>
<keyword id="KW-0963">Cytoplasm</keyword>
<keyword id="KW-0539">Nucleus</keyword>
<keyword id="KW-1185">Reference proteome</keyword>
<keyword id="KW-0346">Stress response</keyword>
<gene>
    <name evidence="4" type="primary">MBS2</name>
    <name evidence="5" type="ordered locus">At5g16470</name>
    <name evidence="6" type="ORF">MQK4.20</name>
</gene>
<accession>Q9FFD8</accession>
<feature type="chain" id="PRO_0000444901" description="Protein METHYLENE BLUE SENSITIVITY 2">
    <location>
        <begin position="1"/>
        <end position="104"/>
    </location>
</feature>
<feature type="region of interest" description="Disordered" evidence="2">
    <location>
        <begin position="1"/>
        <end position="46"/>
    </location>
</feature>
<feature type="region of interest" description="Disordered" evidence="2">
    <location>
        <begin position="64"/>
        <end position="104"/>
    </location>
</feature>
<feature type="compositionally biased region" description="Basic residues" evidence="2">
    <location>
        <begin position="1"/>
        <end position="11"/>
    </location>
</feature>
<feature type="compositionally biased region" description="Basic and acidic residues" evidence="2">
    <location>
        <begin position="36"/>
        <end position="46"/>
    </location>
</feature>
<feature type="compositionally biased region" description="Basic and acidic residues" evidence="2">
    <location>
        <begin position="73"/>
        <end position="82"/>
    </location>
</feature>
<dbReference type="EMBL" id="AB005242">
    <property type="protein sequence ID" value="BAB09614.1"/>
    <property type="molecule type" value="Genomic_DNA"/>
</dbReference>
<dbReference type="EMBL" id="CP002688">
    <property type="protein sequence ID" value="AED92297.1"/>
    <property type="molecule type" value="Genomic_DNA"/>
</dbReference>
<dbReference type="EMBL" id="CP002688">
    <property type="protein sequence ID" value="ANM70670.1"/>
    <property type="molecule type" value="Genomic_DNA"/>
</dbReference>
<dbReference type="EMBL" id="BT003166">
    <property type="protein sequence ID" value="AAO24598.1"/>
    <property type="molecule type" value="mRNA"/>
</dbReference>
<dbReference type="EMBL" id="AK228163">
    <property type="protein sequence ID" value="BAF00119.1"/>
    <property type="molecule type" value="mRNA"/>
</dbReference>
<dbReference type="RefSeq" id="NP_001332259.1">
    <property type="nucleotide sequence ID" value="NM_001343451.1"/>
</dbReference>
<dbReference type="RefSeq" id="NP_197151.1">
    <property type="nucleotide sequence ID" value="NM_121652.4"/>
</dbReference>
<dbReference type="SMR" id="Q9FFD8"/>
<dbReference type="FunCoup" id="Q9FFD8">
    <property type="interactions" value="901"/>
</dbReference>
<dbReference type="IntAct" id="Q9FFD8">
    <property type="interactions" value="1"/>
</dbReference>
<dbReference type="STRING" id="3702.Q9FFD8"/>
<dbReference type="iPTMnet" id="Q9FFD8"/>
<dbReference type="PaxDb" id="3702-AT5G16470.1"/>
<dbReference type="ProteomicsDB" id="238852"/>
<dbReference type="EnsemblPlants" id="AT5G16470.1">
    <property type="protein sequence ID" value="AT5G16470.1"/>
    <property type="gene ID" value="AT5G16470"/>
</dbReference>
<dbReference type="EnsemblPlants" id="AT5G16470.2">
    <property type="protein sequence ID" value="AT5G16470.2"/>
    <property type="gene ID" value="AT5G16470"/>
</dbReference>
<dbReference type="GeneID" id="831508"/>
<dbReference type="Gramene" id="AT5G16470.1">
    <property type="protein sequence ID" value="AT5G16470.1"/>
    <property type="gene ID" value="AT5G16470"/>
</dbReference>
<dbReference type="Gramene" id="AT5G16470.2">
    <property type="protein sequence ID" value="AT5G16470.2"/>
    <property type="gene ID" value="AT5G16470"/>
</dbReference>
<dbReference type="KEGG" id="ath:AT5G16470"/>
<dbReference type="Araport" id="AT5G16470"/>
<dbReference type="TAIR" id="AT5G16470">
    <property type="gene designation" value="MBS2"/>
</dbReference>
<dbReference type="eggNOG" id="ENOG502S122">
    <property type="taxonomic scope" value="Eukaryota"/>
</dbReference>
<dbReference type="HOGENOM" id="CLU_160241_1_0_1"/>
<dbReference type="InParanoid" id="Q9FFD8"/>
<dbReference type="OMA" id="KHPKMPY"/>
<dbReference type="OrthoDB" id="1033795at2759"/>
<dbReference type="PhylomeDB" id="Q9FFD8"/>
<dbReference type="CD-CODE" id="4299E36E">
    <property type="entry name" value="Nucleolus"/>
</dbReference>
<dbReference type="PRO" id="PR:Q9FFD8"/>
<dbReference type="Proteomes" id="UP000006548">
    <property type="component" value="Chromosome 5"/>
</dbReference>
<dbReference type="ExpressionAtlas" id="Q9FFD8">
    <property type="expression patterns" value="baseline and differential"/>
</dbReference>
<dbReference type="GO" id="GO:0005737">
    <property type="term" value="C:cytoplasm"/>
    <property type="evidence" value="ECO:0000314"/>
    <property type="project" value="UniProtKB"/>
</dbReference>
<dbReference type="GO" id="GO:0010494">
    <property type="term" value="C:cytoplasmic stress granule"/>
    <property type="evidence" value="ECO:0000250"/>
    <property type="project" value="UniProtKB"/>
</dbReference>
<dbReference type="GO" id="GO:0005634">
    <property type="term" value="C:nucleus"/>
    <property type="evidence" value="ECO:0000314"/>
    <property type="project" value="UniProtKB"/>
</dbReference>
<dbReference type="GO" id="GO:0009536">
    <property type="term" value="C:plastid"/>
    <property type="evidence" value="ECO:0007005"/>
    <property type="project" value="TAIR"/>
</dbReference>
<dbReference type="GO" id="GO:0003700">
    <property type="term" value="F:DNA-binding transcription factor activity"/>
    <property type="evidence" value="ECO:0000250"/>
    <property type="project" value="TAIR"/>
</dbReference>
<dbReference type="GO" id="GO:0071452">
    <property type="term" value="P:cellular response to singlet oxygen"/>
    <property type="evidence" value="ECO:0000315"/>
    <property type="project" value="TAIR"/>
</dbReference>
<dbReference type="GO" id="GO:0010150">
    <property type="term" value="P:leaf senescence"/>
    <property type="evidence" value="ECO:0000270"/>
    <property type="project" value="UniProtKB"/>
</dbReference>
<dbReference type="GO" id="GO:0006355">
    <property type="term" value="P:regulation of DNA-templated transcription"/>
    <property type="evidence" value="ECO:0000304"/>
    <property type="project" value="TAIR"/>
</dbReference>
<dbReference type="GO" id="GO:1900055">
    <property type="term" value="P:regulation of leaf senescence"/>
    <property type="evidence" value="ECO:0000315"/>
    <property type="project" value="UniProtKB"/>
</dbReference>
<dbReference type="GO" id="GO:0080183">
    <property type="term" value="P:response to photooxidative stress"/>
    <property type="evidence" value="ECO:0000250"/>
    <property type="project" value="UniProtKB"/>
</dbReference>
<dbReference type="InterPro" id="IPR045230">
    <property type="entry name" value="MBS1/2-like"/>
</dbReference>
<dbReference type="PANTHER" id="PTHR21213">
    <property type="entry name" value="GEO09665P1-RELATED"/>
    <property type="match status" value="1"/>
</dbReference>
<dbReference type="PANTHER" id="PTHR21213:SF22">
    <property type="entry name" value="PROTEIN METHYLENE BLUE SENSITIVITY 2"/>
    <property type="match status" value="1"/>
</dbReference>
<dbReference type="SUPFAM" id="SSF118359">
    <property type="entry name" value="Expressed protein At2g23090/F21P24.15"/>
    <property type="match status" value="1"/>
</dbReference>
<organism>
    <name type="scientific">Arabidopsis thaliana</name>
    <name type="common">Mouse-ear cress</name>
    <dbReference type="NCBI Taxonomy" id="3702"/>
    <lineage>
        <taxon>Eukaryota</taxon>
        <taxon>Viridiplantae</taxon>
        <taxon>Streptophyta</taxon>
        <taxon>Embryophyta</taxon>
        <taxon>Tracheophyta</taxon>
        <taxon>Spermatophyta</taxon>
        <taxon>Magnoliopsida</taxon>
        <taxon>eudicotyledons</taxon>
        <taxon>Gunneridae</taxon>
        <taxon>Pentapetalae</taxon>
        <taxon>rosids</taxon>
        <taxon>malvids</taxon>
        <taxon>Brassicales</taxon>
        <taxon>Brassicaceae</taxon>
        <taxon>Camelineae</taxon>
        <taxon>Arabidopsis</taxon>
    </lineage>
</organism>
<reference key="1">
    <citation type="journal article" date="1997" name="DNA Res.">
        <title>Structural analysis of Arabidopsis thaliana chromosome 5. I. Sequence features of the 1.6 Mb regions covered by twenty physically assigned P1 clones.</title>
        <authorList>
            <person name="Sato S."/>
            <person name="Kotani H."/>
            <person name="Nakamura Y."/>
            <person name="Kaneko T."/>
            <person name="Asamizu E."/>
            <person name="Fukami M."/>
            <person name="Miyajima N."/>
            <person name="Tabata S."/>
        </authorList>
    </citation>
    <scope>NUCLEOTIDE SEQUENCE [LARGE SCALE GENOMIC DNA]</scope>
    <source>
        <strain>cv. Columbia</strain>
    </source>
</reference>
<reference key="2">
    <citation type="journal article" date="2017" name="Plant J.">
        <title>Araport11: a complete reannotation of the Arabidopsis thaliana reference genome.</title>
        <authorList>
            <person name="Cheng C.Y."/>
            <person name="Krishnakumar V."/>
            <person name="Chan A.P."/>
            <person name="Thibaud-Nissen F."/>
            <person name="Schobel S."/>
            <person name="Town C.D."/>
        </authorList>
    </citation>
    <scope>GENOME REANNOTATION</scope>
    <source>
        <strain>cv. Columbia</strain>
    </source>
</reference>
<reference key="3">
    <citation type="journal article" date="2003" name="Science">
        <title>Empirical analysis of transcriptional activity in the Arabidopsis genome.</title>
        <authorList>
            <person name="Yamada K."/>
            <person name="Lim J."/>
            <person name="Dale J.M."/>
            <person name="Chen H."/>
            <person name="Shinn P."/>
            <person name="Palm C.J."/>
            <person name="Southwick A.M."/>
            <person name="Wu H.C."/>
            <person name="Kim C.J."/>
            <person name="Nguyen M."/>
            <person name="Pham P.K."/>
            <person name="Cheuk R.F."/>
            <person name="Karlin-Newmann G."/>
            <person name="Liu S.X."/>
            <person name="Lam B."/>
            <person name="Sakano H."/>
            <person name="Wu T."/>
            <person name="Yu G."/>
            <person name="Miranda M."/>
            <person name="Quach H.L."/>
            <person name="Tripp M."/>
            <person name="Chang C.H."/>
            <person name="Lee J.M."/>
            <person name="Toriumi M.J."/>
            <person name="Chan M.M."/>
            <person name="Tang C.C."/>
            <person name="Onodera C.S."/>
            <person name="Deng J.M."/>
            <person name="Akiyama K."/>
            <person name="Ansari Y."/>
            <person name="Arakawa T."/>
            <person name="Banh J."/>
            <person name="Banno F."/>
            <person name="Bowser L."/>
            <person name="Brooks S.Y."/>
            <person name="Carninci P."/>
            <person name="Chao Q."/>
            <person name="Choy N."/>
            <person name="Enju A."/>
            <person name="Goldsmith A.D."/>
            <person name="Gurjal M."/>
            <person name="Hansen N.F."/>
            <person name="Hayashizaki Y."/>
            <person name="Johnson-Hopson C."/>
            <person name="Hsuan V.W."/>
            <person name="Iida K."/>
            <person name="Karnes M."/>
            <person name="Khan S."/>
            <person name="Koesema E."/>
            <person name="Ishida J."/>
            <person name="Jiang P.X."/>
            <person name="Jones T."/>
            <person name="Kawai J."/>
            <person name="Kamiya A."/>
            <person name="Meyers C."/>
            <person name="Nakajima M."/>
            <person name="Narusaka M."/>
            <person name="Seki M."/>
            <person name="Sakurai T."/>
            <person name="Satou M."/>
            <person name="Tamse R."/>
            <person name="Vaysberg M."/>
            <person name="Wallender E.K."/>
            <person name="Wong C."/>
            <person name="Yamamura Y."/>
            <person name="Yuan S."/>
            <person name="Shinozaki K."/>
            <person name="Davis R.W."/>
            <person name="Theologis A."/>
            <person name="Ecker J.R."/>
        </authorList>
    </citation>
    <scope>NUCLEOTIDE SEQUENCE [LARGE SCALE MRNA]</scope>
    <source>
        <strain>cv. Columbia</strain>
    </source>
</reference>
<reference key="4">
    <citation type="submission" date="2006-07" db="EMBL/GenBank/DDBJ databases">
        <title>Large-scale analysis of RIKEN Arabidopsis full-length (RAFL) cDNAs.</title>
        <authorList>
            <person name="Totoki Y."/>
            <person name="Seki M."/>
            <person name="Ishida J."/>
            <person name="Nakajima M."/>
            <person name="Enju A."/>
            <person name="Kamiya A."/>
            <person name="Narusaka M."/>
            <person name="Shin-i T."/>
            <person name="Nakagawa M."/>
            <person name="Sakamoto N."/>
            <person name="Oishi K."/>
            <person name="Kohara Y."/>
            <person name="Kobayashi M."/>
            <person name="Toyoda A."/>
            <person name="Sakaki Y."/>
            <person name="Sakurai T."/>
            <person name="Iida K."/>
            <person name="Akiyama K."/>
            <person name="Satou M."/>
            <person name="Toyoda T."/>
            <person name="Konagaya A."/>
            <person name="Carninci P."/>
            <person name="Kawai J."/>
            <person name="Hayashizaki Y."/>
            <person name="Shinozaki K."/>
        </authorList>
    </citation>
    <scope>NUCLEOTIDE SEQUENCE [LARGE SCALE MRNA]</scope>
    <source>
        <strain>cv. Columbia</strain>
    </source>
</reference>
<reference key="5">
    <citation type="journal article" date="2013" name="Plant Cell">
        <title>A mediator of singlet oxygen responses in Chlamydomonas reinhardtii and Arabidopsis identified by a luciferase-based genetic screen in algal cells.</title>
        <authorList>
            <person name="Shao N."/>
            <person name="Duan G.Y."/>
            <person name="Bock R."/>
        </authorList>
    </citation>
    <scope>FUNCTION</scope>
    <scope>DISRUPTION PHENOTYPE</scope>
    <scope>INDUCTION BY SENESCENCE</scope>
    <scope>SUBCELLULAR LOCATION</scope>
    <source>
        <strain>cv. Columbia</strain>
    </source>
</reference>
<reference key="6">
    <citation type="journal article" date="2009" name="Plant Physiol.">
        <title>Large-scale Arabidopsis phosphoproteome profiling reveals novel chloroplast kinase substrates and phosphorylation networks.</title>
        <authorList>
            <person name="Reiland S."/>
            <person name="Messerli G."/>
            <person name="Baerenfaller K."/>
            <person name="Gerrits B."/>
            <person name="Endler A."/>
            <person name="Grossmann J."/>
            <person name="Gruissem W."/>
            <person name="Baginsky S."/>
        </authorList>
    </citation>
    <scope>IDENTIFICATION BY MASS SPECTROMETRY [LARGE SCALE ANALYSIS]</scope>
</reference>
<sequence>MTGKAKPKKHTAKELQAKADAALTNRGGGKAGLADRTGKEKGGHAKYECPHCKITVPDLKTMQIHHESKHPKLTYEEPRNLHEALAAPAESSKPKPGIRGSLKK</sequence>
<proteinExistence type="evidence at protein level"/>
<evidence type="ECO:0000250" key="1">
    <source>
        <dbReference type="UniProtKB" id="Q9M8S0"/>
    </source>
</evidence>
<evidence type="ECO:0000256" key="2">
    <source>
        <dbReference type="SAM" id="MobiDB-lite"/>
    </source>
</evidence>
<evidence type="ECO:0000269" key="3">
    <source>
    </source>
</evidence>
<evidence type="ECO:0000303" key="4">
    <source>
    </source>
</evidence>
<evidence type="ECO:0000312" key="5">
    <source>
        <dbReference type="Araport" id="AT5G16470"/>
    </source>
</evidence>
<evidence type="ECO:0000312" key="6">
    <source>
        <dbReference type="EMBL" id="BAB09614.1"/>
    </source>
</evidence>
<name>MBS2_ARATH</name>